<dbReference type="EC" id="2.1.1.-" evidence="1"/>
<dbReference type="EMBL" id="CP000771">
    <property type="protein sequence ID" value="ABS61611.1"/>
    <property type="molecule type" value="Genomic_DNA"/>
</dbReference>
<dbReference type="RefSeq" id="WP_011994902.1">
    <property type="nucleotide sequence ID" value="NC_009718.1"/>
</dbReference>
<dbReference type="SMR" id="A7HNX8"/>
<dbReference type="STRING" id="381764.Fnod_1778"/>
<dbReference type="KEGG" id="fno:Fnod_1778"/>
<dbReference type="eggNOG" id="COG0357">
    <property type="taxonomic scope" value="Bacteria"/>
</dbReference>
<dbReference type="HOGENOM" id="CLU_065341_0_1_0"/>
<dbReference type="OrthoDB" id="9808773at2"/>
<dbReference type="Proteomes" id="UP000002415">
    <property type="component" value="Chromosome"/>
</dbReference>
<dbReference type="GO" id="GO:0005829">
    <property type="term" value="C:cytosol"/>
    <property type="evidence" value="ECO:0007669"/>
    <property type="project" value="TreeGrafter"/>
</dbReference>
<dbReference type="GO" id="GO:0070043">
    <property type="term" value="F:rRNA (guanine-N7-)-methyltransferase activity"/>
    <property type="evidence" value="ECO:0007669"/>
    <property type="project" value="UniProtKB-UniRule"/>
</dbReference>
<dbReference type="Gene3D" id="3.40.50.150">
    <property type="entry name" value="Vaccinia Virus protein VP39"/>
    <property type="match status" value="1"/>
</dbReference>
<dbReference type="HAMAP" id="MF_00074">
    <property type="entry name" value="16SrRNA_methyltr_G"/>
    <property type="match status" value="1"/>
</dbReference>
<dbReference type="InterPro" id="IPR003682">
    <property type="entry name" value="rRNA_ssu_MeTfrase_G"/>
</dbReference>
<dbReference type="InterPro" id="IPR029063">
    <property type="entry name" value="SAM-dependent_MTases_sf"/>
</dbReference>
<dbReference type="NCBIfam" id="TIGR00138">
    <property type="entry name" value="rsmG_gidB"/>
    <property type="match status" value="1"/>
</dbReference>
<dbReference type="PANTHER" id="PTHR31760">
    <property type="entry name" value="S-ADENOSYL-L-METHIONINE-DEPENDENT METHYLTRANSFERASES SUPERFAMILY PROTEIN"/>
    <property type="match status" value="1"/>
</dbReference>
<dbReference type="PANTHER" id="PTHR31760:SF0">
    <property type="entry name" value="S-ADENOSYL-L-METHIONINE-DEPENDENT METHYLTRANSFERASES SUPERFAMILY PROTEIN"/>
    <property type="match status" value="1"/>
</dbReference>
<dbReference type="Pfam" id="PF02527">
    <property type="entry name" value="GidB"/>
    <property type="match status" value="1"/>
</dbReference>
<dbReference type="PIRSF" id="PIRSF003078">
    <property type="entry name" value="GidB"/>
    <property type="match status" value="1"/>
</dbReference>
<dbReference type="SUPFAM" id="SSF53335">
    <property type="entry name" value="S-adenosyl-L-methionine-dependent methyltransferases"/>
    <property type="match status" value="1"/>
</dbReference>
<name>RSMG_FERNB</name>
<sequence>MEKTEIVRKYVEKLINSPINLTAYKDFDEAMAFLYLDSVLPVKSEDLGEFFLDIGTGGGVPGVFLSVEFDKKGLLVDSICKKVHFIQQTCKELGIKKVETLCARAEELKGKGDFFEKFDSAVSRAVSKIATVLELTAPYVKVGGKLLLYKGPGYNEELGQSVNAMKELGVKLSEVRRYSIRGKDRFLLVFEKISHTPDKYPRRIGIPEKRPIR</sequence>
<accession>A7HNX8</accession>
<feature type="chain" id="PRO_0000335350" description="Ribosomal RNA small subunit methyltransferase G">
    <location>
        <begin position="1"/>
        <end position="213"/>
    </location>
</feature>
<feature type="binding site" evidence="1">
    <location>
        <position position="55"/>
    </location>
    <ligand>
        <name>S-adenosyl-L-methionine</name>
        <dbReference type="ChEBI" id="CHEBI:59789"/>
    </ligand>
</feature>
<feature type="binding site" evidence="1">
    <location>
        <begin position="105"/>
        <end position="106"/>
    </location>
    <ligand>
        <name>S-adenosyl-L-methionine</name>
        <dbReference type="ChEBI" id="CHEBI:59789"/>
    </ligand>
</feature>
<feature type="binding site" evidence="1">
    <location>
        <position position="124"/>
    </location>
    <ligand>
        <name>S-adenosyl-L-methionine</name>
        <dbReference type="ChEBI" id="CHEBI:59789"/>
    </ligand>
</feature>
<comment type="function">
    <text evidence="1">Specifically methylates the N7 position of a guanine in 16S rRNA.</text>
</comment>
<comment type="subcellular location">
    <subcellularLocation>
        <location evidence="1">Cytoplasm</location>
    </subcellularLocation>
</comment>
<comment type="similarity">
    <text evidence="1">Belongs to the methyltransferase superfamily. RNA methyltransferase RsmG family.</text>
</comment>
<gene>
    <name evidence="1" type="primary">rsmG</name>
    <name type="ordered locus">Fnod_1778</name>
</gene>
<reference key="1">
    <citation type="submission" date="2007-07" db="EMBL/GenBank/DDBJ databases">
        <title>Complete sequence of Fervidobacterium nodosum Rt17-B1.</title>
        <authorList>
            <consortium name="US DOE Joint Genome Institute"/>
            <person name="Copeland A."/>
            <person name="Lucas S."/>
            <person name="Lapidus A."/>
            <person name="Barry K."/>
            <person name="Glavina del Rio T."/>
            <person name="Dalin E."/>
            <person name="Tice H."/>
            <person name="Pitluck S."/>
            <person name="Saunders E."/>
            <person name="Brettin T."/>
            <person name="Bruce D."/>
            <person name="Detter J.C."/>
            <person name="Han C."/>
            <person name="Schmutz J."/>
            <person name="Larimer F."/>
            <person name="Land M."/>
            <person name="Hauser L."/>
            <person name="Kyrpides N."/>
            <person name="Mikhailova N."/>
            <person name="Nelson K."/>
            <person name="Gogarten J.P."/>
            <person name="Noll K."/>
            <person name="Richardson P."/>
        </authorList>
    </citation>
    <scope>NUCLEOTIDE SEQUENCE [LARGE SCALE GENOMIC DNA]</scope>
    <source>
        <strain>ATCC 35602 / DSM 5306 / Rt17-B1</strain>
    </source>
</reference>
<evidence type="ECO:0000255" key="1">
    <source>
        <dbReference type="HAMAP-Rule" id="MF_00074"/>
    </source>
</evidence>
<organism>
    <name type="scientific">Fervidobacterium nodosum (strain ATCC 35602 / DSM 5306 / Rt17-B1)</name>
    <dbReference type="NCBI Taxonomy" id="381764"/>
    <lineage>
        <taxon>Bacteria</taxon>
        <taxon>Thermotogati</taxon>
        <taxon>Thermotogota</taxon>
        <taxon>Thermotogae</taxon>
        <taxon>Thermotogales</taxon>
        <taxon>Fervidobacteriaceae</taxon>
        <taxon>Fervidobacterium</taxon>
    </lineage>
</organism>
<proteinExistence type="inferred from homology"/>
<protein>
    <recommendedName>
        <fullName evidence="1">Ribosomal RNA small subunit methyltransferase G</fullName>
        <ecNumber evidence="1">2.1.1.-</ecNumber>
    </recommendedName>
    <alternativeName>
        <fullName evidence="1">16S rRNA 7-methylguanosine methyltransferase</fullName>
        <shortName evidence="1">16S rRNA m7G methyltransferase</shortName>
    </alternativeName>
</protein>
<keyword id="KW-0963">Cytoplasm</keyword>
<keyword id="KW-0489">Methyltransferase</keyword>
<keyword id="KW-1185">Reference proteome</keyword>
<keyword id="KW-0698">rRNA processing</keyword>
<keyword id="KW-0949">S-adenosyl-L-methionine</keyword>
<keyword id="KW-0808">Transferase</keyword>